<accession>P08133</accession>
<accession>B7Z8A7</accession>
<accession>D3DQH4</accession>
<accession>E9PGK1</accession>
<accession>Q6ZT79</accession>
<dbReference type="EMBL" id="Y00097">
    <property type="protein sequence ID" value="CAA68286.1"/>
    <property type="molecule type" value="mRNA"/>
</dbReference>
<dbReference type="EMBL" id="J03578">
    <property type="protein sequence ID" value="AAA35656.1"/>
    <property type="molecule type" value="mRNA"/>
</dbReference>
<dbReference type="EMBL" id="D00510">
    <property type="protein sequence ID" value="BAA00400.1"/>
    <property type="molecule type" value="mRNA"/>
</dbReference>
<dbReference type="EMBL" id="AK126836">
    <property type="protein sequence ID" value="BAC86715.1"/>
    <property type="status" value="ALT_SEQ"/>
    <property type="molecule type" value="mRNA"/>
</dbReference>
<dbReference type="EMBL" id="AK303078">
    <property type="protein sequence ID" value="BAH13893.1"/>
    <property type="molecule type" value="mRNA"/>
</dbReference>
<dbReference type="EMBL" id="AC008641">
    <property type="status" value="NOT_ANNOTATED_CDS"/>
    <property type="molecule type" value="Genomic_DNA"/>
</dbReference>
<dbReference type="EMBL" id="CH471062">
    <property type="protein sequence ID" value="EAW61684.1"/>
    <property type="molecule type" value="Genomic_DNA"/>
</dbReference>
<dbReference type="EMBL" id="CH471062">
    <property type="protein sequence ID" value="EAW61686.1"/>
    <property type="molecule type" value="Genomic_DNA"/>
</dbReference>
<dbReference type="EMBL" id="BC017046">
    <property type="protein sequence ID" value="AAH17046.1"/>
    <property type="molecule type" value="mRNA"/>
</dbReference>
<dbReference type="CCDS" id="CCDS47315.1">
    <molecule id="P08133-1"/>
</dbReference>
<dbReference type="CCDS" id="CCDS54941.1">
    <molecule id="P08133-2"/>
</dbReference>
<dbReference type="PIR" id="JU0032">
    <property type="entry name" value="AQHU68"/>
</dbReference>
<dbReference type="RefSeq" id="NP_001146.2">
    <molecule id="P08133-1"/>
    <property type="nucleotide sequence ID" value="NM_001155.5"/>
</dbReference>
<dbReference type="RefSeq" id="NP_001180473.1">
    <molecule id="P08133-2"/>
    <property type="nucleotide sequence ID" value="NM_001193544.2"/>
</dbReference>
<dbReference type="RefSeq" id="XP_054208455.1">
    <molecule id="P08133-1"/>
    <property type="nucleotide sequence ID" value="XM_054352480.1"/>
</dbReference>
<dbReference type="PDB" id="1M9I">
    <property type="method" value="X-ray"/>
    <property type="resolution" value="2.65 A"/>
    <property type="chains" value="A=2-673"/>
</dbReference>
<dbReference type="PDBsum" id="1M9I"/>
<dbReference type="SMR" id="P08133"/>
<dbReference type="BioGRID" id="106806">
    <property type="interactions" value="124"/>
</dbReference>
<dbReference type="FunCoup" id="P08133">
    <property type="interactions" value="155"/>
</dbReference>
<dbReference type="IntAct" id="P08133">
    <property type="interactions" value="44"/>
</dbReference>
<dbReference type="MINT" id="P08133"/>
<dbReference type="STRING" id="9606.ENSP00000346550"/>
<dbReference type="TCDB" id="1.A.31.1.2">
    <property type="family name" value="the annexin (annexin) family"/>
</dbReference>
<dbReference type="GlyCosmos" id="P08133">
    <property type="glycosylation" value="2 sites, 1 glycan"/>
</dbReference>
<dbReference type="GlyGen" id="P08133">
    <property type="glycosylation" value="5 sites, 1 N-linked glycan (1 site), 1 O-linked glycan (4 sites)"/>
</dbReference>
<dbReference type="iPTMnet" id="P08133"/>
<dbReference type="MetOSite" id="P08133"/>
<dbReference type="PhosphoSitePlus" id="P08133"/>
<dbReference type="SwissPalm" id="P08133"/>
<dbReference type="BioMuta" id="ANXA6"/>
<dbReference type="REPRODUCTION-2DPAGE" id="IPI00221226"/>
<dbReference type="CPTAC" id="CPTAC-313"/>
<dbReference type="CPTAC" id="CPTAC-314"/>
<dbReference type="jPOST" id="P08133"/>
<dbReference type="MassIVE" id="P08133"/>
<dbReference type="PaxDb" id="9606-ENSP00000346550"/>
<dbReference type="PeptideAtlas" id="P08133"/>
<dbReference type="PRIDE" id="P08133"/>
<dbReference type="ProteomicsDB" id="20335"/>
<dbReference type="ProteomicsDB" id="52071">
    <molecule id="P08133-1"/>
</dbReference>
<dbReference type="Antibodypedia" id="1185">
    <property type="antibodies" value="550 antibodies from 45 providers"/>
</dbReference>
<dbReference type="DNASU" id="309"/>
<dbReference type="Ensembl" id="ENST00000354546.10">
    <molecule id="P08133-1"/>
    <property type="protein sequence ID" value="ENSP00000346550.5"/>
    <property type="gene ID" value="ENSG00000197043.15"/>
</dbReference>
<dbReference type="Ensembl" id="ENST00000523714.5">
    <molecule id="P08133-2"/>
    <property type="protein sequence ID" value="ENSP00000430517.1"/>
    <property type="gene ID" value="ENSG00000197043.15"/>
</dbReference>
<dbReference type="GeneID" id="309"/>
<dbReference type="KEGG" id="hsa:309"/>
<dbReference type="MANE-Select" id="ENST00000354546.10">
    <property type="protein sequence ID" value="ENSP00000346550.5"/>
    <property type="RefSeq nucleotide sequence ID" value="NM_001155.5"/>
    <property type="RefSeq protein sequence ID" value="NP_001146.2"/>
</dbReference>
<dbReference type="UCSC" id="uc003ltl.3">
    <molecule id="P08133-1"/>
    <property type="organism name" value="human"/>
</dbReference>
<dbReference type="AGR" id="HGNC:544"/>
<dbReference type="CTD" id="309"/>
<dbReference type="DisGeNET" id="309"/>
<dbReference type="GeneCards" id="ANXA6"/>
<dbReference type="HGNC" id="HGNC:544">
    <property type="gene designation" value="ANXA6"/>
</dbReference>
<dbReference type="HPA" id="ENSG00000197043">
    <property type="expression patterns" value="Low tissue specificity"/>
</dbReference>
<dbReference type="MIM" id="114070">
    <property type="type" value="gene"/>
</dbReference>
<dbReference type="neXtProt" id="NX_P08133"/>
<dbReference type="OpenTargets" id="ENSG00000197043"/>
<dbReference type="PharmGKB" id="PA24834"/>
<dbReference type="VEuPathDB" id="HostDB:ENSG00000197043"/>
<dbReference type="eggNOG" id="KOG0819">
    <property type="taxonomic scope" value="Eukaryota"/>
</dbReference>
<dbReference type="GeneTree" id="ENSGT00940000158770"/>
<dbReference type="HOGENOM" id="CLU_017145_0_0_1"/>
<dbReference type="InParanoid" id="P08133"/>
<dbReference type="OMA" id="LMGKFER"/>
<dbReference type="OrthoDB" id="37886at2759"/>
<dbReference type="PAN-GO" id="P08133">
    <property type="GO annotations" value="18 GO annotations based on evolutionary models"/>
</dbReference>
<dbReference type="PhylomeDB" id="P08133"/>
<dbReference type="TreeFam" id="TF105452"/>
<dbReference type="PathwayCommons" id="P08133"/>
<dbReference type="Reactome" id="R-HSA-445355">
    <property type="pathway name" value="Smooth Muscle Contraction"/>
</dbReference>
<dbReference type="SignaLink" id="P08133"/>
<dbReference type="SIGNOR" id="P08133"/>
<dbReference type="BioGRID-ORCS" id="309">
    <property type="hits" value="6 hits in 1153 CRISPR screens"/>
</dbReference>
<dbReference type="CD-CODE" id="DEE660B4">
    <property type="entry name" value="Stress granule"/>
</dbReference>
<dbReference type="CD-CODE" id="FB4E32DD">
    <property type="entry name" value="Presynaptic clusters and postsynaptic densities"/>
</dbReference>
<dbReference type="ChiTaRS" id="ANXA6">
    <property type="organism name" value="human"/>
</dbReference>
<dbReference type="EvolutionaryTrace" id="P08133"/>
<dbReference type="GeneWiki" id="ANXA6"/>
<dbReference type="GenomeRNAi" id="309"/>
<dbReference type="Pharos" id="P08133">
    <property type="development level" value="Tbio"/>
</dbReference>
<dbReference type="PRO" id="PR:P08133"/>
<dbReference type="Proteomes" id="UP000005640">
    <property type="component" value="Chromosome 5"/>
</dbReference>
<dbReference type="RNAct" id="P08133">
    <property type="molecule type" value="protein"/>
</dbReference>
<dbReference type="Bgee" id="ENSG00000197043">
    <property type="expression patterns" value="Expressed in granulocyte and 202 other cell types or tissues"/>
</dbReference>
<dbReference type="ExpressionAtlas" id="P08133">
    <property type="expression patterns" value="baseline and differential"/>
</dbReference>
<dbReference type="GO" id="GO:0062023">
    <property type="term" value="C:collagen-containing extracellular matrix"/>
    <property type="evidence" value="ECO:0007005"/>
    <property type="project" value="BHF-UCL"/>
</dbReference>
<dbReference type="GO" id="GO:0005737">
    <property type="term" value="C:cytoplasm"/>
    <property type="evidence" value="ECO:0000318"/>
    <property type="project" value="GO_Central"/>
</dbReference>
<dbReference type="GO" id="GO:0070062">
    <property type="term" value="C:extracellular exosome"/>
    <property type="evidence" value="ECO:0007005"/>
    <property type="project" value="UniProtKB"/>
</dbReference>
<dbReference type="GO" id="GO:0005925">
    <property type="term" value="C:focal adhesion"/>
    <property type="evidence" value="ECO:0007005"/>
    <property type="project" value="UniProtKB"/>
</dbReference>
<dbReference type="GO" id="GO:0031902">
    <property type="term" value="C:late endosome membrane"/>
    <property type="evidence" value="ECO:0000314"/>
    <property type="project" value="UniProtKB"/>
</dbReference>
<dbReference type="GO" id="GO:0005765">
    <property type="term" value="C:lysosomal membrane"/>
    <property type="evidence" value="ECO:0000314"/>
    <property type="project" value="UniProtKB"/>
</dbReference>
<dbReference type="GO" id="GO:0042470">
    <property type="term" value="C:melanosome"/>
    <property type="evidence" value="ECO:0007669"/>
    <property type="project" value="UniProtKB-SubCell"/>
</dbReference>
<dbReference type="GO" id="GO:0016020">
    <property type="term" value="C:membrane"/>
    <property type="evidence" value="ECO:0007005"/>
    <property type="project" value="UniProtKB"/>
</dbReference>
<dbReference type="GO" id="GO:0005739">
    <property type="term" value="C:mitochondrion"/>
    <property type="evidence" value="ECO:0007669"/>
    <property type="project" value="GOC"/>
</dbReference>
<dbReference type="GO" id="GO:0005634">
    <property type="term" value="C:nucleus"/>
    <property type="evidence" value="ECO:0000318"/>
    <property type="project" value="GO_Central"/>
</dbReference>
<dbReference type="GO" id="GO:0048471">
    <property type="term" value="C:perinuclear region of cytoplasm"/>
    <property type="evidence" value="ECO:0007669"/>
    <property type="project" value="Ensembl"/>
</dbReference>
<dbReference type="GO" id="GO:0005886">
    <property type="term" value="C:plasma membrane"/>
    <property type="evidence" value="ECO:0000318"/>
    <property type="project" value="GO_Central"/>
</dbReference>
<dbReference type="GO" id="GO:0012506">
    <property type="term" value="C:vesicle membrane"/>
    <property type="evidence" value="ECO:0000318"/>
    <property type="project" value="GO_Central"/>
</dbReference>
<dbReference type="GO" id="GO:0005509">
    <property type="term" value="F:calcium ion binding"/>
    <property type="evidence" value="ECO:0007669"/>
    <property type="project" value="InterPro"/>
</dbReference>
<dbReference type="GO" id="GO:0005544">
    <property type="term" value="F:calcium-dependent phospholipid binding"/>
    <property type="evidence" value="ECO:0000314"/>
    <property type="project" value="UniProtKB"/>
</dbReference>
<dbReference type="GO" id="GO:0048306">
    <property type="term" value="F:calcium-dependent protein binding"/>
    <property type="evidence" value="ECO:0000353"/>
    <property type="project" value="GO_Central"/>
</dbReference>
<dbReference type="GO" id="GO:0015485">
    <property type="term" value="F:cholesterol binding"/>
    <property type="evidence" value="ECO:0000314"/>
    <property type="project" value="UniProtKB"/>
</dbReference>
<dbReference type="GO" id="GO:0005525">
    <property type="term" value="F:GTP binding"/>
    <property type="evidence" value="ECO:0000315"/>
    <property type="project" value="UniProtKB"/>
</dbReference>
<dbReference type="GO" id="GO:0042802">
    <property type="term" value="F:identical protein binding"/>
    <property type="evidence" value="ECO:0000353"/>
    <property type="project" value="UniProtKB"/>
</dbReference>
<dbReference type="GO" id="GO:0015276">
    <property type="term" value="F:ligand-gated monoatomic ion channel activity"/>
    <property type="evidence" value="ECO:0000315"/>
    <property type="project" value="UniProtKB"/>
</dbReference>
<dbReference type="GO" id="GO:0008289">
    <property type="term" value="F:lipid binding"/>
    <property type="evidence" value="ECO:0000315"/>
    <property type="project" value="UniProtKB"/>
</dbReference>
<dbReference type="GO" id="GO:0001786">
    <property type="term" value="F:phosphatidylserine binding"/>
    <property type="evidence" value="ECO:0000318"/>
    <property type="project" value="GO_Central"/>
</dbReference>
<dbReference type="GO" id="GO:0097190">
    <property type="term" value="P:apoptotic signaling pathway"/>
    <property type="evidence" value="ECO:0000318"/>
    <property type="project" value="GO_Central"/>
</dbReference>
<dbReference type="GO" id="GO:0006816">
    <property type="term" value="P:calcium ion transport"/>
    <property type="evidence" value="ECO:0000318"/>
    <property type="project" value="GO_Central"/>
</dbReference>
<dbReference type="GO" id="GO:0051560">
    <property type="term" value="P:mitochondrial calcium ion homeostasis"/>
    <property type="evidence" value="ECO:0000318"/>
    <property type="project" value="GO_Central"/>
</dbReference>
<dbReference type="GO" id="GO:0034220">
    <property type="term" value="P:monoatomic ion transmembrane transport"/>
    <property type="evidence" value="ECO:0000315"/>
    <property type="project" value="UniProtKB"/>
</dbReference>
<dbReference type="GO" id="GO:0051283">
    <property type="term" value="P:negative regulation of sequestering of calcium ion"/>
    <property type="evidence" value="ECO:0000318"/>
    <property type="project" value="GO_Central"/>
</dbReference>
<dbReference type="GO" id="GO:0006937">
    <property type="term" value="P:regulation of muscle contraction"/>
    <property type="evidence" value="ECO:0007669"/>
    <property type="project" value="Ensembl"/>
</dbReference>
<dbReference type="FunFam" id="1.10.220.10:FF:000001">
    <property type="entry name" value="Annexin"/>
    <property type="match status" value="2"/>
</dbReference>
<dbReference type="FunFam" id="1.10.220.10:FF:000002">
    <property type="entry name" value="Annexin"/>
    <property type="match status" value="1"/>
</dbReference>
<dbReference type="FunFam" id="1.10.220.10:FF:000003">
    <property type="entry name" value="Annexin"/>
    <property type="match status" value="2"/>
</dbReference>
<dbReference type="FunFam" id="1.10.220.10:FF:000004">
    <property type="entry name" value="Annexin"/>
    <property type="match status" value="1"/>
</dbReference>
<dbReference type="FunFam" id="1.10.220.10:FF:000005">
    <property type="entry name" value="Annexin"/>
    <property type="match status" value="1"/>
</dbReference>
<dbReference type="FunFam" id="1.10.220.10:FF:000013">
    <property type="entry name" value="Annexin"/>
    <property type="match status" value="1"/>
</dbReference>
<dbReference type="Gene3D" id="1.10.220.10">
    <property type="entry name" value="Annexin"/>
    <property type="match status" value="8"/>
</dbReference>
<dbReference type="InterPro" id="IPR001464">
    <property type="entry name" value="Annexin"/>
</dbReference>
<dbReference type="InterPro" id="IPR018502">
    <property type="entry name" value="Annexin_repeat"/>
</dbReference>
<dbReference type="InterPro" id="IPR018252">
    <property type="entry name" value="Annexin_repeat_CS"/>
</dbReference>
<dbReference type="InterPro" id="IPR037104">
    <property type="entry name" value="Annexin_sf"/>
</dbReference>
<dbReference type="InterPro" id="IPR002393">
    <property type="entry name" value="ANX6"/>
</dbReference>
<dbReference type="PANTHER" id="PTHR10502">
    <property type="entry name" value="ANNEXIN"/>
    <property type="match status" value="1"/>
</dbReference>
<dbReference type="PANTHER" id="PTHR10502:SF19">
    <property type="entry name" value="ANNEXIN A6"/>
    <property type="match status" value="1"/>
</dbReference>
<dbReference type="Pfam" id="PF00191">
    <property type="entry name" value="Annexin"/>
    <property type="match status" value="8"/>
</dbReference>
<dbReference type="PRINTS" id="PR00196">
    <property type="entry name" value="ANNEXIN"/>
</dbReference>
<dbReference type="PRINTS" id="PR00202">
    <property type="entry name" value="ANNEXINVI"/>
</dbReference>
<dbReference type="SMART" id="SM00335">
    <property type="entry name" value="ANX"/>
    <property type="match status" value="8"/>
</dbReference>
<dbReference type="SUPFAM" id="SSF47874">
    <property type="entry name" value="Annexin"/>
    <property type="match status" value="2"/>
</dbReference>
<dbReference type="PROSITE" id="PS00223">
    <property type="entry name" value="ANNEXIN_1"/>
    <property type="match status" value="8"/>
</dbReference>
<dbReference type="PROSITE" id="PS51897">
    <property type="entry name" value="ANNEXIN_2"/>
    <property type="match status" value="8"/>
</dbReference>
<protein>
    <recommendedName>
        <fullName>Annexin A6</fullName>
    </recommendedName>
    <alternativeName>
        <fullName>67 kDa calelectrin</fullName>
    </alternativeName>
    <alternativeName>
        <fullName>Annexin VI</fullName>
    </alternativeName>
    <alternativeName>
        <fullName>Annexin-6</fullName>
    </alternativeName>
    <alternativeName>
        <fullName>Calphobindin-II</fullName>
        <shortName>CPB-II</shortName>
    </alternativeName>
    <alternativeName>
        <fullName>Chromobindin-20</fullName>
    </alternativeName>
    <alternativeName>
        <fullName>Lipocortin VI</fullName>
    </alternativeName>
    <alternativeName>
        <fullName>Protein III</fullName>
    </alternativeName>
    <alternativeName>
        <fullName>p68</fullName>
    </alternativeName>
    <alternativeName>
        <fullName>p70</fullName>
    </alternativeName>
</protein>
<feature type="initiator methionine" description="Removed" evidence="6 11 13">
    <location>
        <position position="1"/>
    </location>
</feature>
<feature type="chain" id="PRO_0000067494" description="Annexin A6">
    <location>
        <begin position="2"/>
        <end position="673"/>
    </location>
</feature>
<feature type="repeat" description="Annexin 1" evidence="4">
    <location>
        <begin position="20"/>
        <end position="91"/>
    </location>
</feature>
<feature type="repeat" description="Annexin 2" evidence="4">
    <location>
        <begin position="92"/>
        <end position="163"/>
    </location>
</feature>
<feature type="repeat" description="Annexin 3" evidence="4">
    <location>
        <begin position="175"/>
        <end position="247"/>
    </location>
</feature>
<feature type="repeat" description="Annexin 4" evidence="4">
    <location>
        <begin position="251"/>
        <end position="322"/>
    </location>
</feature>
<feature type="repeat" description="Annexin 5" evidence="4">
    <location>
        <begin position="363"/>
        <end position="434"/>
    </location>
</feature>
<feature type="repeat" description="Annexin 6" evidence="4">
    <location>
        <begin position="435"/>
        <end position="506"/>
    </location>
</feature>
<feature type="repeat" description="Annexin 7" evidence="4">
    <location>
        <begin position="521"/>
        <end position="595"/>
    </location>
</feature>
<feature type="repeat" description="Annexin 8" evidence="4">
    <location>
        <begin position="599"/>
        <end position="670"/>
    </location>
</feature>
<feature type="modified residue" description="N-acetylalanine" evidence="11 13">
    <location>
        <position position="2"/>
    </location>
</feature>
<feature type="modified residue" description="Phosphoserine" evidence="12">
    <location>
        <position position="13"/>
    </location>
</feature>
<feature type="modified residue" description="Phosphotyrosine" evidence="10 12">
    <location>
        <position position="30"/>
    </location>
</feature>
<feature type="modified residue" description="N6-acetyllysine" evidence="9">
    <location>
        <position position="63"/>
    </location>
</feature>
<feature type="modified residue" description="N6-acetyllysine" evidence="9">
    <location>
        <position position="68"/>
    </location>
</feature>
<feature type="modified residue" description="N6-acetyllysine" evidence="9">
    <location>
        <position position="75"/>
    </location>
</feature>
<feature type="modified residue" description="N6-acetyllysine" evidence="9">
    <location>
        <position position="81"/>
    </location>
</feature>
<feature type="modified residue" description="Phosphotyrosine" evidence="2">
    <location>
        <position position="201"/>
    </location>
</feature>
<feature type="modified residue" description="N6-acetyllysine" evidence="9">
    <location>
        <position position="306"/>
    </location>
</feature>
<feature type="modified residue" description="N6-acetyllysine" evidence="9">
    <location>
        <position position="370"/>
    </location>
</feature>
<feature type="modified residue" description="N6-acetyllysine" evidence="9">
    <location>
        <position position="418"/>
    </location>
</feature>
<feature type="modified residue" description="Phosphoserine" evidence="3">
    <location>
        <position position="422"/>
    </location>
</feature>
<feature type="modified residue" description="N6-acetyllysine" evidence="9">
    <location>
        <position position="483"/>
    </location>
</feature>
<feature type="modified residue" description="Phosphoserine" evidence="12">
    <location>
        <position position="537"/>
    </location>
</feature>
<feature type="modified residue" description="N6-acetyllysine" evidence="9">
    <location>
        <position position="620"/>
    </location>
</feature>
<feature type="splice variant" id="VSP_045480" description="In isoform 2." evidence="7">
    <location>
        <begin position="1"/>
        <end position="32"/>
    </location>
</feature>
<feature type="sequence conflict" description="In Ref. 4; BAH13893." evidence="8" ref="4">
    <original>T</original>
    <variation>A</variation>
    <location>
        <position position="221"/>
    </location>
</feature>
<feature type="sequence conflict" description="In Ref. 2; AAA35656." evidence="8" ref="2">
    <original>IE</original>
    <variation>MK</variation>
    <location>
        <begin position="226"/>
        <end position="227"/>
    </location>
</feature>
<feature type="sequence conflict" description="In Ref. 4; BAC86715." evidence="8" ref="4">
    <original>C</original>
    <variation>R</variation>
    <location>
        <position position="248"/>
    </location>
</feature>
<feature type="sequence conflict" description="In Ref. 2; AAA35656." evidence="8" ref="2">
    <original>S</original>
    <variation>T</variation>
    <location>
        <position position="555"/>
    </location>
</feature>
<feature type="sequence conflict" description="In Ref. 1; CAA68286." evidence="8" ref="1">
    <original>E</original>
    <variation>D</variation>
    <location>
        <position position="619"/>
    </location>
</feature>
<feature type="helix" evidence="14">
    <location>
        <begin position="22"/>
        <end position="32"/>
    </location>
</feature>
<feature type="strand" evidence="14">
    <location>
        <begin position="34"/>
        <end position="37"/>
    </location>
</feature>
<feature type="helix" evidence="14">
    <location>
        <begin position="40"/>
        <end position="47"/>
    </location>
</feature>
<feature type="helix" evidence="14">
    <location>
        <begin position="52"/>
        <end position="66"/>
    </location>
</feature>
<feature type="helix" evidence="14">
    <location>
        <begin position="70"/>
        <end position="77"/>
    </location>
</feature>
<feature type="helix" evidence="14">
    <location>
        <begin position="80"/>
        <end position="90"/>
    </location>
</feature>
<feature type="helix" evidence="14">
    <location>
        <begin position="93"/>
        <end position="105"/>
    </location>
</feature>
<feature type="strand" evidence="14">
    <location>
        <begin position="106"/>
        <end position="109"/>
    </location>
</feature>
<feature type="helix" evidence="14">
    <location>
        <begin position="112"/>
        <end position="121"/>
    </location>
</feature>
<feature type="helix" evidence="14">
    <location>
        <begin position="124"/>
        <end position="137"/>
    </location>
</feature>
<feature type="helix" evidence="14">
    <location>
        <begin position="142"/>
        <end position="149"/>
    </location>
</feature>
<feature type="helix" evidence="14">
    <location>
        <begin position="152"/>
        <end position="163"/>
    </location>
</feature>
<feature type="helix" evidence="14">
    <location>
        <begin position="174"/>
        <end position="187"/>
    </location>
</feature>
<feature type="turn" evidence="14">
    <location>
        <begin position="188"/>
        <end position="190"/>
    </location>
</feature>
<feature type="strand" evidence="14">
    <location>
        <begin position="191"/>
        <end position="193"/>
    </location>
</feature>
<feature type="helix" evidence="14">
    <location>
        <begin position="196"/>
        <end position="205"/>
    </location>
</feature>
<feature type="helix" evidence="14">
    <location>
        <begin position="208"/>
        <end position="221"/>
    </location>
</feature>
<feature type="strand" evidence="14">
    <location>
        <begin position="222"/>
        <end position="224"/>
    </location>
</feature>
<feature type="helix" evidence="14">
    <location>
        <begin position="226"/>
        <end position="230"/>
    </location>
</feature>
<feature type="turn" evidence="14">
    <location>
        <begin position="231"/>
        <end position="233"/>
    </location>
</feature>
<feature type="helix" evidence="14">
    <location>
        <begin position="236"/>
        <end position="262"/>
    </location>
</feature>
<feature type="strand" evidence="14">
    <location>
        <begin position="264"/>
        <end position="268"/>
    </location>
</feature>
<feature type="helix" evidence="14">
    <location>
        <begin position="271"/>
        <end position="280"/>
    </location>
</feature>
<feature type="turn" evidence="14">
    <location>
        <begin position="281"/>
        <end position="285"/>
    </location>
</feature>
<feature type="helix" evidence="14">
    <location>
        <begin position="286"/>
        <end position="296"/>
    </location>
</feature>
<feature type="strand" evidence="14">
    <location>
        <begin position="297"/>
        <end position="299"/>
    </location>
</feature>
<feature type="helix" evidence="14">
    <location>
        <begin position="301"/>
        <end position="306"/>
    </location>
</feature>
<feature type="helix" evidence="14">
    <location>
        <begin position="311"/>
        <end position="321"/>
    </location>
</feature>
<feature type="helix" evidence="14">
    <location>
        <begin position="333"/>
        <end position="348"/>
    </location>
</feature>
<feature type="helix" evidence="14">
    <location>
        <begin position="365"/>
        <end position="376"/>
    </location>
</feature>
<feature type="strand" evidence="14">
    <location>
        <begin position="377"/>
        <end position="380"/>
    </location>
</feature>
<feature type="helix" evidence="14">
    <location>
        <begin position="383"/>
        <end position="391"/>
    </location>
</feature>
<feature type="helix" evidence="14">
    <location>
        <begin position="395"/>
        <end position="409"/>
    </location>
</feature>
<feature type="helix" evidence="14">
    <location>
        <begin position="413"/>
        <end position="420"/>
    </location>
</feature>
<feature type="helix" evidence="14">
    <location>
        <begin position="424"/>
        <end position="433"/>
    </location>
</feature>
<feature type="helix" evidence="14">
    <location>
        <begin position="436"/>
        <end position="448"/>
    </location>
</feature>
<feature type="strand" evidence="14">
    <location>
        <begin position="449"/>
        <end position="452"/>
    </location>
</feature>
<feature type="helix" evidence="14">
    <location>
        <begin position="455"/>
        <end position="464"/>
    </location>
</feature>
<feature type="helix" evidence="14">
    <location>
        <begin position="467"/>
        <end position="481"/>
    </location>
</feature>
<feature type="helix" evidence="14">
    <location>
        <begin position="485"/>
        <end position="492"/>
    </location>
</feature>
<feature type="helix" evidence="14">
    <location>
        <begin position="495"/>
        <end position="504"/>
    </location>
</feature>
<feature type="helix" evidence="14">
    <location>
        <begin position="516"/>
        <end position="530"/>
    </location>
</feature>
<feature type="helix" evidence="14">
    <location>
        <begin position="535"/>
        <end position="537"/>
    </location>
</feature>
<feature type="helix" evidence="14">
    <location>
        <begin position="546"/>
        <end position="553"/>
    </location>
</feature>
<feature type="helix" evidence="14">
    <location>
        <begin position="556"/>
        <end position="568"/>
    </location>
</feature>
<feature type="strand" evidence="14">
    <location>
        <begin position="569"/>
        <end position="572"/>
    </location>
</feature>
<feature type="helix" evidence="14">
    <location>
        <begin position="574"/>
        <end position="581"/>
    </location>
</feature>
<feature type="helix" evidence="14">
    <location>
        <begin position="584"/>
        <end position="611"/>
    </location>
</feature>
<feature type="strand" evidence="14">
    <location>
        <begin position="613"/>
        <end position="616"/>
    </location>
</feature>
<feature type="helix" evidence="14">
    <location>
        <begin position="619"/>
        <end position="628"/>
    </location>
</feature>
<feature type="turn" evidence="14">
    <location>
        <begin position="630"/>
        <end position="633"/>
    </location>
</feature>
<feature type="helix" evidence="14">
    <location>
        <begin position="634"/>
        <end position="645"/>
    </location>
</feature>
<feature type="helix" evidence="14">
    <location>
        <begin position="649"/>
        <end position="656"/>
    </location>
</feature>
<feature type="helix" evidence="14">
    <location>
        <begin position="659"/>
        <end position="668"/>
    </location>
</feature>
<name>ANXA6_HUMAN</name>
<gene>
    <name type="primary">ANXA6</name>
    <name type="synonym">ANX6</name>
</gene>
<keyword id="KW-0002">3D-structure</keyword>
<keyword id="KW-0007">Acetylation</keyword>
<keyword id="KW-0025">Alternative splicing</keyword>
<keyword id="KW-0041">Annexin</keyword>
<keyword id="KW-0106">Calcium</keyword>
<keyword id="KW-0111">Calcium/phospholipid-binding</keyword>
<keyword id="KW-0963">Cytoplasm</keyword>
<keyword id="KW-0903">Direct protein sequencing</keyword>
<keyword id="KW-0597">Phosphoprotein</keyword>
<keyword id="KW-1267">Proteomics identification</keyword>
<keyword id="KW-1185">Reference proteome</keyword>
<keyword id="KW-0677">Repeat</keyword>
<reference key="1">
    <citation type="journal article" date="1988" name="EMBO J.">
        <title>Primary structure of the human, membrane-associated Ca2+-binding protein p68 a novel member of a protein family.</title>
        <authorList>
            <person name="Crompton M.R."/>
            <person name="Owens R.J."/>
            <person name="Totty N.F."/>
            <person name="Moss S.E."/>
            <person name="Waterfield M.D."/>
            <person name="Crumpton M.J."/>
        </authorList>
    </citation>
    <scope>NUCLEOTIDE SEQUENCE [MRNA] (ISOFORM 1)</scope>
</reference>
<reference key="2">
    <citation type="journal article" date="1988" name="Proc. Natl. Acad. Sci. U.S.A.">
        <title>Human 67-kDa calelectrin contains a duplication of four repeats found in 35-kDa lipocortins.</title>
        <authorList>
            <person name="Suedhof T.C."/>
            <person name="Slaughter C.A."/>
            <person name="Leznicki I."/>
            <person name="Barjon P."/>
            <person name="Reynolds G.A."/>
        </authorList>
    </citation>
    <scope>NUCLEOTIDE SEQUENCE [MRNA] (ISOFORM 1)</scope>
    <scope>PARTIAL PROTEIN SEQUENCE</scope>
</reference>
<reference key="3">
    <citation type="journal article" date="1989" name="J. Biochem.">
        <title>Structure and expression of cDNA for calphobindin II, a human placental coagulation inhibitor.</title>
        <authorList>
            <person name="Iwasaki A."/>
            <person name="Suda M."/>
            <person name="Watanabe M."/>
            <person name="Nakao H."/>
            <person name="Hattori Y."/>
            <person name="Nagoya T."/>
            <person name="Saino Y."/>
            <person name="Shidara Y."/>
            <person name="Maki M."/>
        </authorList>
    </citation>
    <scope>NUCLEOTIDE SEQUENCE [MRNA] (ISOFORM 1)</scope>
</reference>
<reference key="4">
    <citation type="journal article" date="2004" name="Nat. Genet.">
        <title>Complete sequencing and characterization of 21,243 full-length human cDNAs.</title>
        <authorList>
            <person name="Ota T."/>
            <person name="Suzuki Y."/>
            <person name="Nishikawa T."/>
            <person name="Otsuki T."/>
            <person name="Sugiyama T."/>
            <person name="Irie R."/>
            <person name="Wakamatsu A."/>
            <person name="Hayashi K."/>
            <person name="Sato H."/>
            <person name="Nagai K."/>
            <person name="Kimura K."/>
            <person name="Makita H."/>
            <person name="Sekine M."/>
            <person name="Obayashi M."/>
            <person name="Nishi T."/>
            <person name="Shibahara T."/>
            <person name="Tanaka T."/>
            <person name="Ishii S."/>
            <person name="Yamamoto J."/>
            <person name="Saito K."/>
            <person name="Kawai Y."/>
            <person name="Isono Y."/>
            <person name="Nakamura Y."/>
            <person name="Nagahari K."/>
            <person name="Murakami K."/>
            <person name="Yasuda T."/>
            <person name="Iwayanagi T."/>
            <person name="Wagatsuma M."/>
            <person name="Shiratori A."/>
            <person name="Sudo H."/>
            <person name="Hosoiri T."/>
            <person name="Kaku Y."/>
            <person name="Kodaira H."/>
            <person name="Kondo H."/>
            <person name="Sugawara M."/>
            <person name="Takahashi M."/>
            <person name="Kanda K."/>
            <person name="Yokoi T."/>
            <person name="Furuya T."/>
            <person name="Kikkawa E."/>
            <person name="Omura Y."/>
            <person name="Abe K."/>
            <person name="Kamihara K."/>
            <person name="Katsuta N."/>
            <person name="Sato K."/>
            <person name="Tanikawa M."/>
            <person name="Yamazaki M."/>
            <person name="Ninomiya K."/>
            <person name="Ishibashi T."/>
            <person name="Yamashita H."/>
            <person name="Murakawa K."/>
            <person name="Fujimori K."/>
            <person name="Tanai H."/>
            <person name="Kimata M."/>
            <person name="Watanabe M."/>
            <person name="Hiraoka S."/>
            <person name="Chiba Y."/>
            <person name="Ishida S."/>
            <person name="Ono Y."/>
            <person name="Takiguchi S."/>
            <person name="Watanabe S."/>
            <person name="Yosida M."/>
            <person name="Hotuta T."/>
            <person name="Kusano J."/>
            <person name="Kanehori K."/>
            <person name="Takahashi-Fujii A."/>
            <person name="Hara H."/>
            <person name="Tanase T.-O."/>
            <person name="Nomura Y."/>
            <person name="Togiya S."/>
            <person name="Komai F."/>
            <person name="Hara R."/>
            <person name="Takeuchi K."/>
            <person name="Arita M."/>
            <person name="Imose N."/>
            <person name="Musashino K."/>
            <person name="Yuuki H."/>
            <person name="Oshima A."/>
            <person name="Sasaki N."/>
            <person name="Aotsuka S."/>
            <person name="Yoshikawa Y."/>
            <person name="Matsunawa H."/>
            <person name="Ichihara T."/>
            <person name="Shiohata N."/>
            <person name="Sano S."/>
            <person name="Moriya S."/>
            <person name="Momiyama H."/>
            <person name="Satoh N."/>
            <person name="Takami S."/>
            <person name="Terashima Y."/>
            <person name="Suzuki O."/>
            <person name="Nakagawa S."/>
            <person name="Senoh A."/>
            <person name="Mizoguchi H."/>
            <person name="Goto Y."/>
            <person name="Shimizu F."/>
            <person name="Wakebe H."/>
            <person name="Hishigaki H."/>
            <person name="Watanabe T."/>
            <person name="Sugiyama A."/>
            <person name="Takemoto M."/>
            <person name="Kawakami B."/>
            <person name="Yamazaki M."/>
            <person name="Watanabe K."/>
            <person name="Kumagai A."/>
            <person name="Itakura S."/>
            <person name="Fukuzumi Y."/>
            <person name="Fujimori Y."/>
            <person name="Komiyama M."/>
            <person name="Tashiro H."/>
            <person name="Tanigami A."/>
            <person name="Fujiwara T."/>
            <person name="Ono T."/>
            <person name="Yamada K."/>
            <person name="Fujii Y."/>
            <person name="Ozaki K."/>
            <person name="Hirao M."/>
            <person name="Ohmori Y."/>
            <person name="Kawabata A."/>
            <person name="Hikiji T."/>
            <person name="Kobatake N."/>
            <person name="Inagaki H."/>
            <person name="Ikema Y."/>
            <person name="Okamoto S."/>
            <person name="Okitani R."/>
            <person name="Kawakami T."/>
            <person name="Noguchi S."/>
            <person name="Itoh T."/>
            <person name="Shigeta K."/>
            <person name="Senba T."/>
            <person name="Matsumura K."/>
            <person name="Nakajima Y."/>
            <person name="Mizuno T."/>
            <person name="Morinaga M."/>
            <person name="Sasaki M."/>
            <person name="Togashi T."/>
            <person name="Oyama M."/>
            <person name="Hata H."/>
            <person name="Watanabe M."/>
            <person name="Komatsu T."/>
            <person name="Mizushima-Sugano J."/>
            <person name="Satoh T."/>
            <person name="Shirai Y."/>
            <person name="Takahashi Y."/>
            <person name="Nakagawa K."/>
            <person name="Okumura K."/>
            <person name="Nagase T."/>
            <person name="Nomura N."/>
            <person name="Kikuchi H."/>
            <person name="Masuho Y."/>
            <person name="Yamashita R."/>
            <person name="Nakai K."/>
            <person name="Yada T."/>
            <person name="Nakamura Y."/>
            <person name="Ohara O."/>
            <person name="Isogai T."/>
            <person name="Sugano S."/>
        </authorList>
    </citation>
    <scope>NUCLEOTIDE SEQUENCE [LARGE SCALE MRNA] (ISOFORMS 1 AND 2)</scope>
    <source>
        <tissue>Amygdala</tissue>
        <tissue>Thymus</tissue>
    </source>
</reference>
<reference key="5">
    <citation type="journal article" date="2004" name="Nature">
        <title>The DNA sequence and comparative analysis of human chromosome 5.</title>
        <authorList>
            <person name="Schmutz J."/>
            <person name="Martin J."/>
            <person name="Terry A."/>
            <person name="Couronne O."/>
            <person name="Grimwood J."/>
            <person name="Lowry S."/>
            <person name="Gordon L.A."/>
            <person name="Scott D."/>
            <person name="Xie G."/>
            <person name="Huang W."/>
            <person name="Hellsten U."/>
            <person name="Tran-Gyamfi M."/>
            <person name="She X."/>
            <person name="Prabhakar S."/>
            <person name="Aerts A."/>
            <person name="Altherr M."/>
            <person name="Bajorek E."/>
            <person name="Black S."/>
            <person name="Branscomb E."/>
            <person name="Caoile C."/>
            <person name="Challacombe J.F."/>
            <person name="Chan Y.M."/>
            <person name="Denys M."/>
            <person name="Detter J.C."/>
            <person name="Escobar J."/>
            <person name="Flowers D."/>
            <person name="Fotopulos D."/>
            <person name="Glavina T."/>
            <person name="Gomez M."/>
            <person name="Gonzales E."/>
            <person name="Goodstein D."/>
            <person name="Grigoriev I."/>
            <person name="Groza M."/>
            <person name="Hammon N."/>
            <person name="Hawkins T."/>
            <person name="Haydu L."/>
            <person name="Israni S."/>
            <person name="Jett J."/>
            <person name="Kadner K."/>
            <person name="Kimball H."/>
            <person name="Kobayashi A."/>
            <person name="Lopez F."/>
            <person name="Lou Y."/>
            <person name="Martinez D."/>
            <person name="Medina C."/>
            <person name="Morgan J."/>
            <person name="Nandkeshwar R."/>
            <person name="Noonan J.P."/>
            <person name="Pitluck S."/>
            <person name="Pollard M."/>
            <person name="Predki P."/>
            <person name="Priest J."/>
            <person name="Ramirez L."/>
            <person name="Retterer J."/>
            <person name="Rodriguez A."/>
            <person name="Rogers S."/>
            <person name="Salamov A."/>
            <person name="Salazar A."/>
            <person name="Thayer N."/>
            <person name="Tice H."/>
            <person name="Tsai M."/>
            <person name="Ustaszewska A."/>
            <person name="Vo N."/>
            <person name="Wheeler J."/>
            <person name="Wu K."/>
            <person name="Yang J."/>
            <person name="Dickson M."/>
            <person name="Cheng J.-F."/>
            <person name="Eichler E.E."/>
            <person name="Olsen A."/>
            <person name="Pennacchio L.A."/>
            <person name="Rokhsar D.S."/>
            <person name="Richardson P."/>
            <person name="Lucas S.M."/>
            <person name="Myers R.M."/>
            <person name="Rubin E.M."/>
        </authorList>
    </citation>
    <scope>NUCLEOTIDE SEQUENCE [LARGE SCALE GENOMIC DNA]</scope>
</reference>
<reference key="6">
    <citation type="submission" date="2005-09" db="EMBL/GenBank/DDBJ databases">
        <authorList>
            <person name="Mural R.J."/>
            <person name="Istrail S."/>
            <person name="Sutton G.G."/>
            <person name="Florea L."/>
            <person name="Halpern A.L."/>
            <person name="Mobarry C.M."/>
            <person name="Lippert R."/>
            <person name="Walenz B."/>
            <person name="Shatkay H."/>
            <person name="Dew I."/>
            <person name="Miller J.R."/>
            <person name="Flanigan M.J."/>
            <person name="Edwards N.J."/>
            <person name="Bolanos R."/>
            <person name="Fasulo D."/>
            <person name="Halldorsson B.V."/>
            <person name="Hannenhalli S."/>
            <person name="Turner R."/>
            <person name="Yooseph S."/>
            <person name="Lu F."/>
            <person name="Nusskern D.R."/>
            <person name="Shue B.C."/>
            <person name="Zheng X.H."/>
            <person name="Zhong F."/>
            <person name="Delcher A.L."/>
            <person name="Huson D.H."/>
            <person name="Kravitz S.A."/>
            <person name="Mouchard L."/>
            <person name="Reinert K."/>
            <person name="Remington K.A."/>
            <person name="Clark A.G."/>
            <person name="Waterman M.S."/>
            <person name="Eichler E.E."/>
            <person name="Adams M.D."/>
            <person name="Hunkapiller M.W."/>
            <person name="Myers E.W."/>
            <person name="Venter J.C."/>
        </authorList>
    </citation>
    <scope>NUCLEOTIDE SEQUENCE [LARGE SCALE GENOMIC DNA]</scope>
</reference>
<reference key="7">
    <citation type="journal article" date="2004" name="Genome Res.">
        <title>The status, quality, and expansion of the NIH full-length cDNA project: the Mammalian Gene Collection (MGC).</title>
        <authorList>
            <consortium name="The MGC Project Team"/>
        </authorList>
    </citation>
    <scope>NUCLEOTIDE SEQUENCE [LARGE SCALE MRNA] (ISOFORM 1)</scope>
    <source>
        <tissue>Uterus</tissue>
    </source>
</reference>
<reference key="8">
    <citation type="journal article" date="1990" name="J. Biochem.">
        <title>Structure and properties of calphobindin II, an anticoagulant protein from human placenta.</title>
        <authorList>
            <person name="Yoshizaki H."/>
            <person name="Mizoguchi T."/>
            <person name="Arai K."/>
            <person name="Shiratsuchi M."/>
            <person name="Shidara Y."/>
            <person name="Maki M."/>
        </authorList>
    </citation>
    <scope>PROTEIN SEQUENCE OF 2-673</scope>
</reference>
<reference key="9">
    <citation type="journal article" date="2004" name="Biochem. J.">
        <title>Vectorial proteomics reveal targeting, phosphorylation and specific fragmentation of polymerase I and transcript release factor (PTRF) at the surface of caveolae in human adipocytes.</title>
        <authorList>
            <person name="Aboulaich N."/>
            <person name="Vainonen J.P."/>
            <person name="Stralfors P."/>
            <person name="Vener A.V."/>
        </authorList>
    </citation>
    <scope>PROTEIN SEQUENCE OF 485-499</scope>
    <source>
        <tissue>Adipocyte</tissue>
    </source>
</reference>
<reference key="10">
    <citation type="journal article" date="2003" name="Nature">
        <title>Proteomic characterization of the human centrosome by protein correlation profiling.</title>
        <authorList>
            <person name="Andersen J.S."/>
            <person name="Wilkinson C.J."/>
            <person name="Mayor T."/>
            <person name="Mortensen P."/>
            <person name="Nigg E.A."/>
            <person name="Mann M."/>
        </authorList>
    </citation>
    <scope>IDENTIFICATION BY MASS SPECTROMETRY</scope>
    <source>
        <tissue>Lymphoblast</tissue>
    </source>
</reference>
<reference key="11">
    <citation type="journal article" date="2006" name="J. Proteome Res.">
        <title>Proteomic and bioinformatic characterization of the biogenesis and function of melanosomes.</title>
        <authorList>
            <person name="Chi A."/>
            <person name="Valencia J.C."/>
            <person name="Hu Z.-Z."/>
            <person name="Watabe H."/>
            <person name="Yamaguchi H."/>
            <person name="Mangini N.J."/>
            <person name="Huang H."/>
            <person name="Canfield V.A."/>
            <person name="Cheng K.C."/>
            <person name="Yang F."/>
            <person name="Abe R."/>
            <person name="Yamagishi S."/>
            <person name="Shabanowitz J."/>
            <person name="Hearing V.J."/>
            <person name="Wu C."/>
            <person name="Appella E."/>
            <person name="Hunt D.F."/>
        </authorList>
    </citation>
    <scope>SUBCELLULAR LOCATION [LARGE SCALE ANALYSIS]</scope>
    <source>
        <tissue>Melanoma</tissue>
    </source>
</reference>
<reference key="12">
    <citation type="journal article" date="2009" name="Sci. Signal.">
        <title>Quantitative phosphoproteomic analysis of T cell receptor signaling reveals system-wide modulation of protein-protein interactions.</title>
        <authorList>
            <person name="Mayya V."/>
            <person name="Lundgren D.H."/>
            <person name="Hwang S.-I."/>
            <person name="Rezaul K."/>
            <person name="Wu L."/>
            <person name="Eng J.K."/>
            <person name="Rodionov V."/>
            <person name="Han D.K."/>
        </authorList>
    </citation>
    <scope>PHOSPHORYLATION [LARGE SCALE ANALYSIS] AT TYR-30</scope>
    <scope>IDENTIFICATION BY MASS SPECTROMETRY [LARGE SCALE ANALYSIS]</scope>
    <source>
        <tissue>Leukemic T-cell</tissue>
    </source>
</reference>
<reference key="13">
    <citation type="journal article" date="2009" name="Science">
        <title>Lysine acetylation targets protein complexes and co-regulates major cellular functions.</title>
        <authorList>
            <person name="Choudhary C."/>
            <person name="Kumar C."/>
            <person name="Gnad F."/>
            <person name="Nielsen M.L."/>
            <person name="Rehman M."/>
            <person name="Walther T.C."/>
            <person name="Olsen J.V."/>
            <person name="Mann M."/>
        </authorList>
    </citation>
    <scope>ACETYLATION [LARGE SCALE ANALYSIS] AT LYS-63; LYS-68; LYS-75; LYS-81; LYS-306; LYS-370; LYS-418; LYS-483 AND LYS-620</scope>
    <scope>IDENTIFICATION BY MASS SPECTROMETRY [LARGE SCALE ANALYSIS]</scope>
</reference>
<reference key="14">
    <citation type="journal article" date="2011" name="BMC Syst. Biol.">
        <title>Initial characterization of the human central proteome.</title>
        <authorList>
            <person name="Burkard T.R."/>
            <person name="Planyavsky M."/>
            <person name="Kaupe I."/>
            <person name="Breitwieser F.P."/>
            <person name="Buerckstuemmer T."/>
            <person name="Bennett K.L."/>
            <person name="Superti-Furga G."/>
            <person name="Colinge J."/>
        </authorList>
    </citation>
    <scope>IDENTIFICATION BY MASS SPECTROMETRY [LARGE SCALE ANALYSIS]</scope>
</reference>
<reference key="15">
    <citation type="journal article" date="2012" name="Proc. Natl. Acad. Sci. U.S.A.">
        <title>N-terminal acetylome analyses and functional insights of the N-terminal acetyltransferase NatB.</title>
        <authorList>
            <person name="Van Damme P."/>
            <person name="Lasa M."/>
            <person name="Polevoda B."/>
            <person name="Gazquez C."/>
            <person name="Elosegui-Artola A."/>
            <person name="Kim D.S."/>
            <person name="De Juan-Pardo E."/>
            <person name="Demeyer K."/>
            <person name="Hole K."/>
            <person name="Larrea E."/>
            <person name="Timmerman E."/>
            <person name="Prieto J."/>
            <person name="Arnesen T."/>
            <person name="Sherman F."/>
            <person name="Gevaert K."/>
            <person name="Aldabe R."/>
        </authorList>
    </citation>
    <scope>ACETYLATION [LARGE SCALE ANALYSIS] AT ALA-2</scope>
    <scope>CLEAVAGE OF INITIATOR METHIONINE [LARGE SCALE ANALYSIS]</scope>
    <scope>IDENTIFICATION BY MASS SPECTROMETRY [LARGE SCALE ANALYSIS]</scope>
</reference>
<reference key="16">
    <citation type="journal article" date="2014" name="J. Proteomics">
        <title>An enzyme assisted RP-RPLC approach for in-depth analysis of human liver phosphoproteome.</title>
        <authorList>
            <person name="Bian Y."/>
            <person name="Song C."/>
            <person name="Cheng K."/>
            <person name="Dong M."/>
            <person name="Wang F."/>
            <person name="Huang J."/>
            <person name="Sun D."/>
            <person name="Wang L."/>
            <person name="Ye M."/>
            <person name="Zou H."/>
        </authorList>
    </citation>
    <scope>PHOSPHORYLATION [LARGE SCALE ANALYSIS] AT SER-13; TYR-30 AND SER-537</scope>
    <scope>IDENTIFICATION BY MASS SPECTROMETRY [LARGE SCALE ANALYSIS]</scope>
    <source>
        <tissue>Liver</tissue>
    </source>
</reference>
<reference key="17">
    <citation type="journal article" date="2015" name="Proteomics">
        <title>N-terminome analysis of the human mitochondrial proteome.</title>
        <authorList>
            <person name="Vaca Jacome A.S."/>
            <person name="Rabilloud T."/>
            <person name="Schaeffer-Reiss C."/>
            <person name="Rompais M."/>
            <person name="Ayoub D."/>
            <person name="Lane L."/>
            <person name="Bairoch A."/>
            <person name="Van Dorsselaer A."/>
            <person name="Carapito C."/>
        </authorList>
    </citation>
    <scope>ACETYLATION [LARGE SCALE ANALYSIS] AT ALA-2</scope>
    <scope>CLEAVAGE OF INITIATOR METHIONINE [LARGE SCALE ANALYSIS]</scope>
    <scope>IDENTIFICATION BY MASS SPECTROMETRY [LARGE SCALE ANALYSIS]</scope>
</reference>
<reference key="18">
    <citation type="journal article" date="1996" name="J. Mol. Biol.">
        <title>The structure of recombinant human annexin VI in crystals and membrane-bound.</title>
        <authorList>
            <person name="Benz J."/>
            <person name="Bergner A."/>
            <person name="Hofmann A."/>
            <person name="Demange P."/>
            <person name="Goettig P."/>
            <person name="Liemann S."/>
            <person name="Huber R."/>
            <person name="Voges D."/>
        </authorList>
    </citation>
    <scope>X-RAY CRYSTALLOGRAPHY (3.2 ANGSTROMS)</scope>
</reference>
<organism>
    <name type="scientific">Homo sapiens</name>
    <name type="common">Human</name>
    <dbReference type="NCBI Taxonomy" id="9606"/>
    <lineage>
        <taxon>Eukaryota</taxon>
        <taxon>Metazoa</taxon>
        <taxon>Chordata</taxon>
        <taxon>Craniata</taxon>
        <taxon>Vertebrata</taxon>
        <taxon>Euteleostomi</taxon>
        <taxon>Mammalia</taxon>
        <taxon>Eutheria</taxon>
        <taxon>Euarchontoglires</taxon>
        <taxon>Primates</taxon>
        <taxon>Haplorrhini</taxon>
        <taxon>Catarrhini</taxon>
        <taxon>Hominidae</taxon>
        <taxon>Homo</taxon>
    </lineage>
</organism>
<sequence>MAKPAQGAKYRGSIHDFPGFDPNQDAEALYTAMKGFGSDKEAILDIITSRSNRQRQEVCQSYKSLYGKDLIADLKYELTGKFERLIVGLMRPPAYCDAKEIKDAISGIGTDEKCLIEILASRTNEQMHQLVAAYKDAYERDLEADIIGDTSGHFQKMLVVLLQGTREEDDVVSEDLVQQDVQDLYEAGELKWGTDEAQFIYILGNRSKQHLRLVFDEYLKTTGKPIEASIRGELSGDFEKLMLAVVKCIRSTPEYFAERLFKAMKGLGTRDNTLIRIMVSRSELDMLDIREIFRTKYEKSLYSMIKNDTSGEYKKTLLKLSGGDDDAAGQFFPEAAQVAYQMWELSAVARVELKGTVRPANDFNPDADAKALRKAMKGLGTDEDTIIDIITHRSNVQRQQIRQTFKSHFGRDLMTDLKSEISGDLARLILGLMMPPAHYDAKQLKKAMEGAGTDEKALIEILATRTNAEIRAINEAYKEDYHKSLEDALSSDTSGHFRRILISLATGHREEGGENLDQAREDAQVAAEILEIADTPSGDKTSLETRFMTILCTRSYPHLRRVFQEFIKMTNYDVEHTIKKEMSGDVRDAFVAIVQSVKNKPLFFADKLYKSMKGAGTDEKTLTRIMVSRSEIDLLNIRREFIEKYDKSLHQAIEGDTSGDFLKALLALCGGED</sequence>
<evidence type="ECO:0000250" key="1"/>
<evidence type="ECO:0000250" key="2">
    <source>
        <dbReference type="UniProtKB" id="P14824"/>
    </source>
</evidence>
<evidence type="ECO:0000250" key="3">
    <source>
        <dbReference type="UniProtKB" id="P48037"/>
    </source>
</evidence>
<evidence type="ECO:0000255" key="4">
    <source>
        <dbReference type="PROSITE-ProRule" id="PRU01245"/>
    </source>
</evidence>
<evidence type="ECO:0000269" key="5">
    <source>
    </source>
</evidence>
<evidence type="ECO:0000269" key="6">
    <source>
    </source>
</evidence>
<evidence type="ECO:0000303" key="7">
    <source>
    </source>
</evidence>
<evidence type="ECO:0000305" key="8"/>
<evidence type="ECO:0007744" key="9">
    <source>
    </source>
</evidence>
<evidence type="ECO:0007744" key="10">
    <source>
    </source>
</evidence>
<evidence type="ECO:0007744" key="11">
    <source>
    </source>
</evidence>
<evidence type="ECO:0007744" key="12">
    <source>
    </source>
</evidence>
<evidence type="ECO:0007744" key="13">
    <source>
    </source>
</evidence>
<evidence type="ECO:0007829" key="14">
    <source>
        <dbReference type="PDB" id="1M9I"/>
    </source>
</evidence>
<comment type="function">
    <text>May associate with CD21. May regulate the release of Ca(2+) from intracellular stores.</text>
</comment>
<comment type="interaction">
    <interactant intactId="EBI-352541">
        <id>P08133</id>
    </interactant>
    <interactant intactId="EBI-17178971">
        <id>Q14005-2</id>
        <label>IL16</label>
    </interactant>
    <organismsDiffer>false</organismsDiffer>
    <experiments>3</experiments>
</comment>
<comment type="interaction">
    <interactant intactId="EBI-352541">
        <id>P08133</id>
    </interactant>
    <interactant intactId="EBI-366233">
        <id>P10636-8</id>
        <label>MAPT</label>
    </interactant>
    <organismsDiffer>false</organismsDiffer>
    <experiments>5</experiments>
</comment>
<comment type="subcellular location">
    <subcellularLocation>
        <location evidence="1">Cytoplasm</location>
    </subcellularLocation>
    <subcellularLocation>
        <location evidence="5">Melanosome</location>
    </subcellularLocation>
    <text>Identified by mass spectrometry in melanosome fractions from stage I to stage IV.</text>
</comment>
<comment type="alternative products">
    <event type="alternative splicing"/>
    <isoform>
        <id>P08133-1</id>
        <name>1</name>
        <sequence type="displayed"/>
    </isoform>
    <isoform>
        <id>P08133-2</id>
        <name>2</name>
        <sequence type="described" ref="VSP_045480"/>
    </isoform>
</comment>
<comment type="induction">
    <text>By Epstein-Barr virus (EBV).</text>
</comment>
<comment type="domain">
    <text>A pair of annexin repeats may form one binding site for calcium and phospholipid.</text>
</comment>
<comment type="PTM">
    <text>Phosphorylated in response to growth factor stimulation.</text>
</comment>
<comment type="miscellaneous">
    <text>Seems to bind one calcium ion with high affinity.</text>
</comment>
<comment type="similarity">
    <text evidence="4 8">Belongs to the annexin family.</text>
</comment>
<proteinExistence type="evidence at protein level"/>